<organism>
    <name type="scientific">Triticum aestivum</name>
    <name type="common">Wheat</name>
    <dbReference type="NCBI Taxonomy" id="4565"/>
    <lineage>
        <taxon>Eukaryota</taxon>
        <taxon>Viridiplantae</taxon>
        <taxon>Streptophyta</taxon>
        <taxon>Embryophyta</taxon>
        <taxon>Tracheophyta</taxon>
        <taxon>Spermatophyta</taxon>
        <taxon>Magnoliopsida</taxon>
        <taxon>Liliopsida</taxon>
        <taxon>Poales</taxon>
        <taxon>Poaceae</taxon>
        <taxon>BOP clade</taxon>
        <taxon>Pooideae</taxon>
        <taxon>Triticodae</taxon>
        <taxon>Triticeae</taxon>
        <taxon>Triticinae</taxon>
        <taxon>Triticum</taxon>
    </lineage>
</organism>
<comment type="function">
    <text evidence="1">DNA-dependent RNA polymerase catalyzes the transcription of DNA into RNA using the four ribonucleoside triphosphates as substrates.</text>
</comment>
<comment type="catalytic activity">
    <reaction evidence="1">
        <text>RNA(n) + a ribonucleoside 5'-triphosphate = RNA(n+1) + diphosphate</text>
        <dbReference type="Rhea" id="RHEA:21248"/>
        <dbReference type="Rhea" id="RHEA-COMP:14527"/>
        <dbReference type="Rhea" id="RHEA-COMP:17342"/>
        <dbReference type="ChEBI" id="CHEBI:33019"/>
        <dbReference type="ChEBI" id="CHEBI:61557"/>
        <dbReference type="ChEBI" id="CHEBI:140395"/>
        <dbReference type="EC" id="2.7.7.6"/>
    </reaction>
</comment>
<comment type="subunit">
    <text evidence="1">In plastids the minimal PEP RNA polymerase catalytic core is composed of four subunits: alpha, beta, beta', and beta''. When a (nuclear-encoded) sigma factor is associated with the core the holoenzyme is formed, which can initiate transcription.</text>
</comment>
<comment type="subcellular location">
    <subcellularLocation>
        <location>Plastid</location>
        <location>Chloroplast</location>
    </subcellularLocation>
</comment>
<comment type="domain">
    <text evidence="1">The N-terminal domain is essential for RNAP assembly and basal transcription, whereas the C-terminal domain is involved in interaction with transcriptional regulators and with upstream promoter elements.</text>
</comment>
<comment type="similarity">
    <text evidence="1">Belongs to the RNA polymerase alpha chain family.</text>
</comment>
<feature type="chain" id="PRO_0000175503" description="DNA-directed RNA polymerase subunit alpha">
    <location>
        <begin position="1"/>
        <end position="339"/>
    </location>
</feature>
<feature type="region of interest" description="Alpha N-terminal domain (alpha-NTD)" evidence="1">
    <location>
        <begin position="10"/>
        <end position="233"/>
    </location>
</feature>
<feature type="region of interest" description="Alpha C-terminal domain (alpha-CTD)" evidence="1">
    <location>
        <begin position="264"/>
        <end position="339"/>
    </location>
</feature>
<feature type="sequence conflict" description="In Ref. 1; CAA33618." evidence="2" ref="1">
    <original>E</original>
    <variation>V</variation>
    <location>
        <position position="5"/>
    </location>
</feature>
<feature type="sequence conflict" description="In Ref. 1; CAA33618." evidence="2" ref="1">
    <original>H</original>
    <variation>L</variation>
    <location>
        <position position="196"/>
    </location>
</feature>
<feature type="sequence conflict" description="In Ref. 1; CAA33618." evidence="2" ref="1">
    <original>IWT</original>
    <variation>YGS</variation>
    <location>
        <begin position="203"/>
        <end position="205"/>
    </location>
</feature>
<feature type="sequence conflict" description="In Ref. 1 and 3." evidence="2" ref="1 3">
    <original>SF</original>
    <variation>CI</variation>
    <location>
        <begin position="338"/>
        <end position="339"/>
    </location>
</feature>
<keyword id="KW-0150">Chloroplast</keyword>
<keyword id="KW-0240">DNA-directed RNA polymerase</keyword>
<keyword id="KW-0548">Nucleotidyltransferase</keyword>
<keyword id="KW-0934">Plastid</keyword>
<keyword id="KW-1185">Reference proteome</keyword>
<keyword id="KW-0804">Transcription</keyword>
<keyword id="KW-0808">Transferase</keyword>
<dbReference type="EC" id="2.7.7.6" evidence="1"/>
<dbReference type="EMBL" id="X15595">
    <property type="protein sequence ID" value="CAA33618.1"/>
    <property type="molecule type" value="Genomic_DNA"/>
</dbReference>
<dbReference type="EMBL" id="AB042240">
    <property type="protein sequence ID" value="BAB47065.1"/>
    <property type="molecule type" value="Genomic_DNA"/>
</dbReference>
<dbReference type="EMBL" id="X54751">
    <property type="protein sequence ID" value="CAA38553.1"/>
    <property type="molecule type" value="Genomic_DNA"/>
</dbReference>
<dbReference type="PIR" id="S05314">
    <property type="entry name" value="RNWTA"/>
</dbReference>
<dbReference type="RefSeq" id="NP_114289.1">
    <property type="nucleotide sequence ID" value="NC_002762.1"/>
</dbReference>
<dbReference type="SMR" id="P12073"/>
<dbReference type="STRING" id="4565.P12073"/>
<dbReference type="PaxDb" id="4565-EPlTAEP00000010059"/>
<dbReference type="EnsemblPlants" id="TraesPARA_EIv1.0_2055450.1">
    <property type="protein sequence ID" value="TraesPARA_EIv1.0_2055450.1.CDS1"/>
    <property type="gene ID" value="TraesPARA_EIv1.0_2055450"/>
</dbReference>
<dbReference type="EnsemblPlants" id="TraesPARA_EIv1.0_2644510.1">
    <property type="protein sequence ID" value="TraesPARA_EIv1.0_2644510.1.CDS1"/>
    <property type="gene ID" value="TraesPARA_EIv1.0_2644510"/>
</dbReference>
<dbReference type="EnsemblPlants" id="TraesPARA_EIv1.0_2644670.1">
    <property type="protein sequence ID" value="TraesPARA_EIv1.0_2644670.1.CDS1"/>
    <property type="gene ID" value="TraesPARA_EIv1.0_2644670"/>
</dbReference>
<dbReference type="EnsemblPlants" id="TraesPARA_EIv1.0_2646120.1">
    <property type="protein sequence ID" value="TraesPARA_EIv1.0_2646120.1.CDS1"/>
    <property type="gene ID" value="TraesPARA_EIv1.0_2646120"/>
</dbReference>
<dbReference type="EnsemblPlants" id="TraesPARA_EIv1.0_2646450.1">
    <property type="protein sequence ID" value="TraesPARA_EIv1.0_2646450.1.CDS1"/>
    <property type="gene ID" value="TraesPARA_EIv1.0_2646450"/>
</dbReference>
<dbReference type="EnsemblPlants" id="TraesPARA_EIv1.0_2647350.1">
    <property type="protein sequence ID" value="TraesPARA_EIv1.0_2647350.1.CDS1"/>
    <property type="gene ID" value="TraesPARA_EIv1.0_2647350"/>
</dbReference>
<dbReference type="EnsemblPlants" id="TraesPARA_EIv1.0_2647790.1">
    <property type="protein sequence ID" value="TraesPARA_EIv1.0_2647790.1.CDS1"/>
    <property type="gene ID" value="TraesPARA_EIv1.0_2647790"/>
</dbReference>
<dbReference type="EnsemblPlants" id="TraesPARA_EIv1.0_2648760.1">
    <property type="protein sequence ID" value="TraesPARA_EIv1.0_2648760.1.CDS1"/>
    <property type="gene ID" value="TraesPARA_EIv1.0_2648760"/>
</dbReference>
<dbReference type="EnsemblPlants" id="TraesPARA_EIv1.0_2650520.1">
    <property type="protein sequence ID" value="TraesPARA_EIv1.0_2650520.1.CDS1"/>
    <property type="gene ID" value="TraesPARA_EIv1.0_2650520"/>
</dbReference>
<dbReference type="EnsemblPlants" id="TraesPARA_EIv1.0_2652760.1">
    <property type="protein sequence ID" value="TraesPARA_EIv1.0_2652760.1.CDS1"/>
    <property type="gene ID" value="TraesPARA_EIv1.0_2652760"/>
</dbReference>
<dbReference type="EnsemblPlants" id="TraesPARA_EIv1.0_2654620.1">
    <property type="protein sequence ID" value="TraesPARA_EIv1.0_2654620.1.CDS1"/>
    <property type="gene ID" value="TraesPARA_EIv1.0_2654620"/>
</dbReference>
<dbReference type="EnsemblPlants" id="TraesPARA_EIv1.0_2655040.1">
    <property type="protein sequence ID" value="TraesPARA_EIv1.0_2655040.1.CDS1"/>
    <property type="gene ID" value="TraesPARA_EIv1.0_2655040"/>
</dbReference>
<dbReference type="EnsemblPlants" id="TraesPARA_EIv1.0_2655390.1">
    <property type="protein sequence ID" value="TraesPARA_EIv1.0_2655390.1.CDS1"/>
    <property type="gene ID" value="TraesPARA_EIv1.0_2655390"/>
</dbReference>
<dbReference type="EnsemblPlants" id="TraesPARA_EIv1.0_2655520.1">
    <property type="protein sequence ID" value="TraesPARA_EIv1.0_2655520.1.CDS1"/>
    <property type="gene ID" value="TraesPARA_EIv1.0_2655520"/>
</dbReference>
<dbReference type="EnsemblPlants" id="TraesPARA_EIv1.0_2660410.1">
    <property type="protein sequence ID" value="TraesPARA_EIv1.0_2660410.1.CDS1"/>
    <property type="gene ID" value="TraesPARA_EIv1.0_2660410"/>
</dbReference>
<dbReference type="EnsemblPlants" id="TraesPARA_EIv1.0_2662980.1">
    <property type="protein sequence ID" value="TraesPARA_EIv1.0_2662980.1.CDS1"/>
    <property type="gene ID" value="TraesPARA_EIv1.0_2662980"/>
</dbReference>
<dbReference type="EnsemblPlants" id="TraesPARA_EIv1.0_2663370.1">
    <property type="protein sequence ID" value="TraesPARA_EIv1.0_2663370.1.CDS1"/>
    <property type="gene ID" value="TraesPARA_EIv1.0_2663370"/>
</dbReference>
<dbReference type="EnsemblPlants" id="TraesPARA_EIv1.0_2663610.1">
    <property type="protein sequence ID" value="TraesPARA_EIv1.0_2663610.1.CDS1"/>
    <property type="gene ID" value="TraesPARA_EIv1.0_2663610"/>
</dbReference>
<dbReference type="EnsemblPlants" id="TraesPARA_EIv1.0_2665470.1">
    <property type="protein sequence ID" value="TraesPARA_EIv1.0_2665470.1.CDS1"/>
    <property type="gene ID" value="TraesPARA_EIv1.0_2665470"/>
</dbReference>
<dbReference type="EnsemblPlants" id="TraesPARA_EIv1.0_2665520.1">
    <property type="protein sequence ID" value="TraesPARA_EIv1.0_2665520.1.CDS1"/>
    <property type="gene ID" value="TraesPARA_EIv1.0_2665520"/>
</dbReference>
<dbReference type="EnsemblPlants" id="TraesPARA_EIv1.0_2666320.1">
    <property type="protein sequence ID" value="TraesPARA_EIv1.0_2666320.1.CDS1"/>
    <property type="gene ID" value="TraesPARA_EIv1.0_2666320"/>
</dbReference>
<dbReference type="EnsemblPlants" id="TraesPARA_EIv1.0_2667850.1">
    <property type="protein sequence ID" value="TraesPARA_EIv1.0_2667850.1.CDS1"/>
    <property type="gene ID" value="TraesPARA_EIv1.0_2667850"/>
</dbReference>
<dbReference type="EnsemblPlants" id="TraesPARA_EIv1.0_2668290.1">
    <property type="protein sequence ID" value="TraesPARA_EIv1.0_2668290.1.CDS1"/>
    <property type="gene ID" value="TraesPARA_EIv1.0_2668290"/>
</dbReference>
<dbReference type="EnsemblPlants" id="TraesPARA_EIv1.0_2668330.1">
    <property type="protein sequence ID" value="TraesPARA_EIv1.0_2668330.1.CDS1"/>
    <property type="gene ID" value="TraesPARA_EIv1.0_2668330"/>
</dbReference>
<dbReference type="EnsemblPlants" id="TraesPARA_EIv1.0_2669930.1">
    <property type="protein sequence ID" value="TraesPARA_EIv1.0_2669930.1.CDS1"/>
    <property type="gene ID" value="TraesPARA_EIv1.0_2669930"/>
</dbReference>
<dbReference type="EnsemblPlants" id="TraesPARA_EIv1.0_2674240.1">
    <property type="protein sequence ID" value="TraesPARA_EIv1.0_2674240.1.CDS1"/>
    <property type="gene ID" value="TraesPARA_EIv1.0_2674240"/>
</dbReference>
<dbReference type="EnsemblPlants" id="TraesPARA_EIv1.0_2675330.1">
    <property type="protein sequence ID" value="TraesPARA_EIv1.0_2675330.1.CDS1"/>
    <property type="gene ID" value="TraesPARA_EIv1.0_2675330"/>
</dbReference>
<dbReference type="EnsemblPlants" id="TraesPARA_EIv1.0_2678960.1">
    <property type="protein sequence ID" value="TraesPARA_EIv1.0_2678960.1.CDS1"/>
    <property type="gene ID" value="TraesPARA_EIv1.0_2678960"/>
</dbReference>
<dbReference type="EnsemblPlants" id="TraesPARA_EIv1.0_2679870.1">
    <property type="protein sequence ID" value="TraesPARA_EIv1.0_2679870.1.CDS1"/>
    <property type="gene ID" value="TraesPARA_EIv1.0_2679870"/>
</dbReference>
<dbReference type="EnsemblPlants" id="TraesPARA_EIv1.0_2680240.1">
    <property type="protein sequence ID" value="TraesPARA_EIv1.0_2680240.1.CDS1"/>
    <property type="gene ID" value="TraesPARA_EIv1.0_2680240"/>
</dbReference>
<dbReference type="EnsemblPlants" id="TraesPARA_EIv1.0_2681100.1">
    <property type="protein sequence ID" value="TraesPARA_EIv1.0_2681100.1.CDS1"/>
    <property type="gene ID" value="TraesPARA_EIv1.0_2681100"/>
</dbReference>
<dbReference type="EnsemblPlants" id="TraesPARA_EIv1.0_2681980.1">
    <property type="protein sequence ID" value="TraesPARA_EIv1.0_2681980.1.CDS1"/>
    <property type="gene ID" value="TraesPARA_EIv1.0_2681980"/>
</dbReference>
<dbReference type="EnsemblPlants" id="TraesSYM3B03G01563980.1">
    <property type="protein sequence ID" value="TraesSYM3B03G01563980.1.CDS1"/>
    <property type="gene ID" value="TraesSYM3B03G01563980"/>
</dbReference>
<dbReference type="GeneID" id="803149"/>
<dbReference type="Gramene" id="TraesPARA_EIv1.0_2055450.1">
    <property type="protein sequence ID" value="TraesPARA_EIv1.0_2055450.1.CDS1"/>
    <property type="gene ID" value="TraesPARA_EIv1.0_2055450"/>
</dbReference>
<dbReference type="Gramene" id="TraesPARA_EIv1.0_2644510.1">
    <property type="protein sequence ID" value="TraesPARA_EIv1.0_2644510.1.CDS1"/>
    <property type="gene ID" value="TraesPARA_EIv1.0_2644510"/>
</dbReference>
<dbReference type="Gramene" id="TraesPARA_EIv1.0_2644670.1">
    <property type="protein sequence ID" value="TraesPARA_EIv1.0_2644670.1.CDS1"/>
    <property type="gene ID" value="TraesPARA_EIv1.0_2644670"/>
</dbReference>
<dbReference type="Gramene" id="TraesPARA_EIv1.0_2646120.1">
    <property type="protein sequence ID" value="TraesPARA_EIv1.0_2646120.1.CDS1"/>
    <property type="gene ID" value="TraesPARA_EIv1.0_2646120"/>
</dbReference>
<dbReference type="Gramene" id="TraesPARA_EIv1.0_2646450.1">
    <property type="protein sequence ID" value="TraesPARA_EIv1.0_2646450.1.CDS1"/>
    <property type="gene ID" value="TraesPARA_EIv1.0_2646450"/>
</dbReference>
<dbReference type="Gramene" id="TraesPARA_EIv1.0_2647350.1">
    <property type="protein sequence ID" value="TraesPARA_EIv1.0_2647350.1.CDS1"/>
    <property type="gene ID" value="TraesPARA_EIv1.0_2647350"/>
</dbReference>
<dbReference type="Gramene" id="TraesPARA_EIv1.0_2647790.1">
    <property type="protein sequence ID" value="TraesPARA_EIv1.0_2647790.1.CDS1"/>
    <property type="gene ID" value="TraesPARA_EIv1.0_2647790"/>
</dbReference>
<dbReference type="Gramene" id="TraesPARA_EIv1.0_2648760.1">
    <property type="protein sequence ID" value="TraesPARA_EIv1.0_2648760.1.CDS1"/>
    <property type="gene ID" value="TraesPARA_EIv1.0_2648760"/>
</dbReference>
<dbReference type="Gramene" id="TraesPARA_EIv1.0_2650520.1">
    <property type="protein sequence ID" value="TraesPARA_EIv1.0_2650520.1.CDS1"/>
    <property type="gene ID" value="TraesPARA_EIv1.0_2650520"/>
</dbReference>
<dbReference type="Gramene" id="TraesPARA_EIv1.0_2652760.1">
    <property type="protein sequence ID" value="TraesPARA_EIv1.0_2652760.1.CDS1"/>
    <property type="gene ID" value="TraesPARA_EIv1.0_2652760"/>
</dbReference>
<dbReference type="Gramene" id="TraesPARA_EIv1.0_2654620.1">
    <property type="protein sequence ID" value="TraesPARA_EIv1.0_2654620.1.CDS1"/>
    <property type="gene ID" value="TraesPARA_EIv1.0_2654620"/>
</dbReference>
<dbReference type="Gramene" id="TraesPARA_EIv1.0_2655040.1">
    <property type="protein sequence ID" value="TraesPARA_EIv1.0_2655040.1.CDS1"/>
    <property type="gene ID" value="TraesPARA_EIv1.0_2655040"/>
</dbReference>
<dbReference type="Gramene" id="TraesPARA_EIv1.0_2655390.1">
    <property type="protein sequence ID" value="TraesPARA_EIv1.0_2655390.1.CDS1"/>
    <property type="gene ID" value="TraesPARA_EIv1.0_2655390"/>
</dbReference>
<dbReference type="Gramene" id="TraesPARA_EIv1.0_2655520.1">
    <property type="protein sequence ID" value="TraesPARA_EIv1.0_2655520.1.CDS1"/>
    <property type="gene ID" value="TraesPARA_EIv1.0_2655520"/>
</dbReference>
<dbReference type="Gramene" id="TraesPARA_EIv1.0_2660410.1">
    <property type="protein sequence ID" value="TraesPARA_EIv1.0_2660410.1.CDS1"/>
    <property type="gene ID" value="TraesPARA_EIv1.0_2660410"/>
</dbReference>
<dbReference type="Gramene" id="TraesPARA_EIv1.0_2662980.1">
    <property type="protein sequence ID" value="TraesPARA_EIv1.0_2662980.1.CDS1"/>
    <property type="gene ID" value="TraesPARA_EIv1.0_2662980"/>
</dbReference>
<dbReference type="Gramene" id="TraesPARA_EIv1.0_2663370.1">
    <property type="protein sequence ID" value="TraesPARA_EIv1.0_2663370.1.CDS1"/>
    <property type="gene ID" value="TraesPARA_EIv1.0_2663370"/>
</dbReference>
<dbReference type="Gramene" id="TraesPARA_EIv1.0_2663610.1">
    <property type="protein sequence ID" value="TraesPARA_EIv1.0_2663610.1.CDS1"/>
    <property type="gene ID" value="TraesPARA_EIv1.0_2663610"/>
</dbReference>
<dbReference type="Gramene" id="TraesPARA_EIv1.0_2665470.1">
    <property type="protein sequence ID" value="TraesPARA_EIv1.0_2665470.1.CDS1"/>
    <property type="gene ID" value="TraesPARA_EIv1.0_2665470"/>
</dbReference>
<dbReference type="Gramene" id="TraesPARA_EIv1.0_2665520.1">
    <property type="protein sequence ID" value="TraesPARA_EIv1.0_2665520.1.CDS1"/>
    <property type="gene ID" value="TraesPARA_EIv1.0_2665520"/>
</dbReference>
<dbReference type="Gramene" id="TraesPARA_EIv1.0_2666320.1">
    <property type="protein sequence ID" value="TraesPARA_EIv1.0_2666320.1.CDS1"/>
    <property type="gene ID" value="TraesPARA_EIv1.0_2666320"/>
</dbReference>
<dbReference type="Gramene" id="TraesPARA_EIv1.0_2667850.1">
    <property type="protein sequence ID" value="TraesPARA_EIv1.0_2667850.1.CDS1"/>
    <property type="gene ID" value="TraesPARA_EIv1.0_2667850"/>
</dbReference>
<dbReference type="Gramene" id="TraesPARA_EIv1.0_2668290.1">
    <property type="protein sequence ID" value="TraesPARA_EIv1.0_2668290.1.CDS1"/>
    <property type="gene ID" value="TraesPARA_EIv1.0_2668290"/>
</dbReference>
<dbReference type="Gramene" id="TraesPARA_EIv1.0_2668330.1">
    <property type="protein sequence ID" value="TraesPARA_EIv1.0_2668330.1.CDS1"/>
    <property type="gene ID" value="TraesPARA_EIv1.0_2668330"/>
</dbReference>
<dbReference type="Gramene" id="TraesPARA_EIv1.0_2669930.1">
    <property type="protein sequence ID" value="TraesPARA_EIv1.0_2669930.1.CDS1"/>
    <property type="gene ID" value="TraesPARA_EIv1.0_2669930"/>
</dbReference>
<dbReference type="Gramene" id="TraesPARA_EIv1.0_2674240.1">
    <property type="protein sequence ID" value="TraesPARA_EIv1.0_2674240.1.CDS1"/>
    <property type="gene ID" value="TraesPARA_EIv1.0_2674240"/>
</dbReference>
<dbReference type="Gramene" id="TraesPARA_EIv1.0_2675330.1">
    <property type="protein sequence ID" value="TraesPARA_EIv1.0_2675330.1.CDS1"/>
    <property type="gene ID" value="TraesPARA_EIv1.0_2675330"/>
</dbReference>
<dbReference type="Gramene" id="TraesPARA_EIv1.0_2678960.1">
    <property type="protein sequence ID" value="TraesPARA_EIv1.0_2678960.1.CDS1"/>
    <property type="gene ID" value="TraesPARA_EIv1.0_2678960"/>
</dbReference>
<dbReference type="Gramene" id="TraesPARA_EIv1.0_2679870.1">
    <property type="protein sequence ID" value="TraesPARA_EIv1.0_2679870.1.CDS1"/>
    <property type="gene ID" value="TraesPARA_EIv1.0_2679870"/>
</dbReference>
<dbReference type="Gramene" id="TraesPARA_EIv1.0_2680240.1">
    <property type="protein sequence ID" value="TraesPARA_EIv1.0_2680240.1.CDS1"/>
    <property type="gene ID" value="TraesPARA_EIv1.0_2680240"/>
</dbReference>
<dbReference type="Gramene" id="TraesPARA_EIv1.0_2681100.1">
    <property type="protein sequence ID" value="TraesPARA_EIv1.0_2681100.1.CDS1"/>
    <property type="gene ID" value="TraesPARA_EIv1.0_2681100"/>
</dbReference>
<dbReference type="Gramene" id="TraesPARA_EIv1.0_2681980.1">
    <property type="protein sequence ID" value="TraesPARA_EIv1.0_2681980.1.CDS1"/>
    <property type="gene ID" value="TraesPARA_EIv1.0_2681980"/>
</dbReference>
<dbReference type="Gramene" id="TraesSYM3B03G01563980.1">
    <property type="protein sequence ID" value="TraesSYM3B03G01563980.1.CDS1"/>
    <property type="gene ID" value="TraesSYM3B03G01563980"/>
</dbReference>
<dbReference type="KEGG" id="taes:803149"/>
<dbReference type="eggNOG" id="ENOG502QRS7">
    <property type="taxonomic scope" value="Eukaryota"/>
</dbReference>
<dbReference type="HOGENOM" id="CLU_053084_2_0_1"/>
<dbReference type="Proteomes" id="UP000019116">
    <property type="component" value="Chloroplast"/>
</dbReference>
<dbReference type="ExpressionAtlas" id="P12073">
    <property type="expression patterns" value="differential"/>
</dbReference>
<dbReference type="GO" id="GO:0009507">
    <property type="term" value="C:chloroplast"/>
    <property type="evidence" value="ECO:0007669"/>
    <property type="project" value="UniProtKB-SubCell"/>
</dbReference>
<dbReference type="GO" id="GO:0000428">
    <property type="term" value="C:DNA-directed RNA polymerase complex"/>
    <property type="evidence" value="ECO:0007669"/>
    <property type="project" value="UniProtKB-KW"/>
</dbReference>
<dbReference type="GO" id="GO:0005739">
    <property type="term" value="C:mitochondrion"/>
    <property type="evidence" value="ECO:0007669"/>
    <property type="project" value="GOC"/>
</dbReference>
<dbReference type="GO" id="GO:0003677">
    <property type="term" value="F:DNA binding"/>
    <property type="evidence" value="ECO:0007669"/>
    <property type="project" value="UniProtKB-UniRule"/>
</dbReference>
<dbReference type="GO" id="GO:0003899">
    <property type="term" value="F:DNA-directed RNA polymerase activity"/>
    <property type="evidence" value="ECO:0007669"/>
    <property type="project" value="UniProtKB-UniRule"/>
</dbReference>
<dbReference type="GO" id="GO:0046983">
    <property type="term" value="F:protein dimerization activity"/>
    <property type="evidence" value="ECO:0007669"/>
    <property type="project" value="InterPro"/>
</dbReference>
<dbReference type="GO" id="GO:0006351">
    <property type="term" value="P:DNA-templated transcription"/>
    <property type="evidence" value="ECO:0007669"/>
    <property type="project" value="UniProtKB-UniRule"/>
</dbReference>
<dbReference type="CDD" id="cd06928">
    <property type="entry name" value="RNAP_alpha_NTD"/>
    <property type="match status" value="1"/>
</dbReference>
<dbReference type="FunFam" id="2.170.120.12:FF:000001">
    <property type="entry name" value="DNA-directed RNA polymerase subunit alpha"/>
    <property type="match status" value="1"/>
</dbReference>
<dbReference type="Gene3D" id="1.10.150.20">
    <property type="entry name" value="5' to 3' exonuclease, C-terminal subdomain"/>
    <property type="match status" value="1"/>
</dbReference>
<dbReference type="Gene3D" id="2.170.120.12">
    <property type="entry name" value="DNA-directed RNA polymerase, insert domain"/>
    <property type="match status" value="1"/>
</dbReference>
<dbReference type="Gene3D" id="3.30.1360.10">
    <property type="entry name" value="RNA polymerase, RBP11-like subunit"/>
    <property type="match status" value="1"/>
</dbReference>
<dbReference type="HAMAP" id="MF_00059">
    <property type="entry name" value="RNApol_bact_RpoA"/>
    <property type="match status" value="1"/>
</dbReference>
<dbReference type="InterPro" id="IPR011262">
    <property type="entry name" value="DNA-dir_RNA_pol_insert"/>
</dbReference>
<dbReference type="InterPro" id="IPR011263">
    <property type="entry name" value="DNA-dir_RNA_pol_RpoA/D/Rpb3"/>
</dbReference>
<dbReference type="InterPro" id="IPR011773">
    <property type="entry name" value="DNA-dir_RpoA"/>
</dbReference>
<dbReference type="InterPro" id="IPR036603">
    <property type="entry name" value="RBP11-like"/>
</dbReference>
<dbReference type="InterPro" id="IPR011260">
    <property type="entry name" value="RNAP_asu_C"/>
</dbReference>
<dbReference type="InterPro" id="IPR036643">
    <property type="entry name" value="RNApol_insert_sf"/>
</dbReference>
<dbReference type="NCBIfam" id="TIGR02027">
    <property type="entry name" value="rpoA"/>
    <property type="match status" value="1"/>
</dbReference>
<dbReference type="Pfam" id="PF01000">
    <property type="entry name" value="RNA_pol_A_bac"/>
    <property type="match status" value="1"/>
</dbReference>
<dbReference type="Pfam" id="PF03118">
    <property type="entry name" value="RNA_pol_A_CTD"/>
    <property type="match status" value="1"/>
</dbReference>
<dbReference type="Pfam" id="PF01193">
    <property type="entry name" value="RNA_pol_L"/>
    <property type="match status" value="1"/>
</dbReference>
<dbReference type="SMART" id="SM00662">
    <property type="entry name" value="RPOLD"/>
    <property type="match status" value="1"/>
</dbReference>
<dbReference type="SUPFAM" id="SSF47789">
    <property type="entry name" value="C-terminal domain of RNA polymerase alpha subunit"/>
    <property type="match status" value="1"/>
</dbReference>
<dbReference type="SUPFAM" id="SSF56553">
    <property type="entry name" value="Insert subdomain of RNA polymerase alpha subunit"/>
    <property type="match status" value="1"/>
</dbReference>
<dbReference type="SUPFAM" id="SSF55257">
    <property type="entry name" value="RBP11-like subunits of RNA polymerase"/>
    <property type="match status" value="1"/>
</dbReference>
<name>RPOA_WHEAT</name>
<accession>P12073</accession>
<sequence length="339" mass="38869">MVREEVAGSTQTLQWKCVESRVDSKRLYYGRFILSPLRKGQADTVGIALRRALLGEIEGTCITRAKFGSVPHEYSTIAGIEESVQEILLNLKEIVLRSNLYGVRDASICVKGPRYITAQDIILPPSVEIVDTAQPIANLTEPIDFCIDLQIKRDRGYQTELRKNYQDGSYPIDAVSMPVRNVNYSIFSCGNGNEKHEILFLEIWTNGSLTPKEALYEASRNLIDLFLPFLHAEEEGASFEENKNRFTPPLFTFQKRLTNLKKNKKGIPLNCIFIDQLELTSRTYNCLKRANIHTLLDLLSKTEEDLLRIDSFRMEDRKHIWDTLEKHLPIDLLKNKLSF</sequence>
<geneLocation type="chloroplast"/>
<evidence type="ECO:0000255" key="1">
    <source>
        <dbReference type="HAMAP-Rule" id="MF_00059"/>
    </source>
</evidence>
<evidence type="ECO:0000305" key="2"/>
<gene>
    <name evidence="1" type="primary">rpoA</name>
</gene>
<proteinExistence type="inferred from homology"/>
<protein>
    <recommendedName>
        <fullName evidence="1">DNA-directed RNA polymerase subunit alpha</fullName>
        <shortName evidence="1">PEP</shortName>
        <ecNumber evidence="1">2.7.7.6</ecNumber>
    </recommendedName>
    <alternativeName>
        <fullName evidence="1">Plastid-encoded RNA polymerase subunit alpha</fullName>
        <shortName evidence="1">RNA polymerase subunit alpha</shortName>
    </alternativeName>
</protein>
<reference key="1">
    <citation type="journal article" date="1989" name="Nucleic Acids Res.">
        <title>Nucleotide sequence of the rpoA gene in wheat chloroplast DNA.</title>
        <authorList>
            <person name="Hird S.M."/>
            <person name="Dyer T.A."/>
            <person name="Gray J.C."/>
        </authorList>
    </citation>
    <scope>NUCLEOTIDE SEQUENCE [GENOMIC DNA]</scope>
    <source>
        <strain>cv. Mardler</strain>
    </source>
</reference>
<reference key="2">
    <citation type="journal article" date="2000" name="Plant Mol. Biol. Rep.">
        <title>Chinese spring wheat (Triticum aestivum L.) chloroplast genome: complete sequence and contig clones.</title>
        <authorList>
            <person name="Ogihara Y."/>
            <person name="Isono K."/>
            <person name="Kojima T."/>
            <person name="Endo A."/>
            <person name="Hanaoka M."/>
            <person name="Shiina T."/>
            <person name="Terachi T."/>
            <person name="Utsugi S."/>
            <person name="Murata M."/>
            <person name="Mori N."/>
            <person name="Takumi S."/>
            <person name="Ikeo K."/>
            <person name="Gojobori T."/>
            <person name="Murai R."/>
            <person name="Murai K."/>
            <person name="Matsuoka Y."/>
            <person name="Ohnishi Y."/>
            <person name="Tajiri H."/>
            <person name="Tsunewaki K."/>
        </authorList>
    </citation>
    <scope>NUCLEOTIDE SEQUENCE [LARGE SCALE GENOMIC DNA]</scope>
    <source>
        <strain>cv. Chinese Spring</strain>
    </source>
</reference>
<reference key="3">
    <citation type="journal article" date="1991" name="Plant Mol. Biol.">
        <title>Nucleotide sequence of the wheat chloroplast petB and petD genes encoding apocytochrome b-563 and subunit IV of the cytochrome bf complex.</title>
        <authorList>
            <person name="Hird S.M."/>
            <person name="Wilson R.J."/>
            <person name="Dyer T.A."/>
            <person name="Gray J.C."/>
        </authorList>
    </citation>
    <scope>NUCLEOTIDE SEQUENCE [GENOMIC DNA] OF 322-339</scope>
    <source>
        <strain>cv. Mardler</strain>
    </source>
</reference>